<reference key="1">
    <citation type="journal article" date="1995" name="Gene">
        <title>Identification of the gene encoding a mechanosensitive channel MscL homologue in Clostridium perfringens.</title>
        <authorList>
            <person name="Matsushita O."/>
            <person name="Jung C.M."/>
            <person name="Okabe A."/>
        </authorList>
    </citation>
    <scope>NUCLEOTIDE SEQUENCE [GENOMIC DNA]</scope>
    <source>
        <strain>ATCC 3628 / NCIMB 10662 / Type C</strain>
    </source>
</reference>
<reference key="2">
    <citation type="journal article" date="2002" name="Proc. Natl. Acad. Sci. U.S.A.">
        <title>Complete genome sequence of Clostridium perfringens, an anaerobic flesh-eater.</title>
        <authorList>
            <person name="Shimizu T."/>
            <person name="Ohtani K."/>
            <person name="Hirakawa H."/>
            <person name="Ohshima K."/>
            <person name="Yamashita A."/>
            <person name="Shiba T."/>
            <person name="Ogasawara N."/>
            <person name="Hattori M."/>
            <person name="Kuhara S."/>
            <person name="Hayashi H."/>
        </authorList>
    </citation>
    <scope>NUCLEOTIDE SEQUENCE [LARGE SCALE GENOMIC DNA]</scope>
    <source>
        <strain>13 / Type A</strain>
    </source>
</reference>
<gene>
    <name evidence="1" type="primary">mscL</name>
    <name type="ordered locus">CPE0174</name>
</gene>
<name>MSCL_CLOPE</name>
<dbReference type="EMBL" id="D50309">
    <property type="protein sequence ID" value="BAA08847.1"/>
    <property type="molecule type" value="Genomic_DNA"/>
</dbReference>
<dbReference type="EMBL" id="BA000016">
    <property type="protein sequence ID" value="BAB79880.1"/>
    <property type="molecule type" value="Genomic_DNA"/>
</dbReference>
<dbReference type="RefSeq" id="WP_011009654.1">
    <property type="nucleotide sequence ID" value="NC_003366.1"/>
</dbReference>
<dbReference type="SMR" id="P53380"/>
<dbReference type="STRING" id="195102.gene:10489418"/>
<dbReference type="KEGG" id="cpe:CPE0174"/>
<dbReference type="HOGENOM" id="CLU_095787_2_3_9"/>
<dbReference type="Proteomes" id="UP000000818">
    <property type="component" value="Chromosome"/>
</dbReference>
<dbReference type="GO" id="GO:0005886">
    <property type="term" value="C:plasma membrane"/>
    <property type="evidence" value="ECO:0007669"/>
    <property type="project" value="UniProtKB-SubCell"/>
</dbReference>
<dbReference type="GO" id="GO:0008381">
    <property type="term" value="F:mechanosensitive monoatomic ion channel activity"/>
    <property type="evidence" value="ECO:0007669"/>
    <property type="project" value="UniProtKB-UniRule"/>
</dbReference>
<dbReference type="Gene3D" id="1.10.1200.120">
    <property type="entry name" value="Large-conductance mechanosensitive channel, MscL, domain 1"/>
    <property type="match status" value="1"/>
</dbReference>
<dbReference type="HAMAP" id="MF_00115">
    <property type="entry name" value="MscL"/>
    <property type="match status" value="1"/>
</dbReference>
<dbReference type="InterPro" id="IPR019823">
    <property type="entry name" value="Mechanosensitive_channel_CS"/>
</dbReference>
<dbReference type="InterPro" id="IPR001185">
    <property type="entry name" value="MS_channel"/>
</dbReference>
<dbReference type="InterPro" id="IPR037673">
    <property type="entry name" value="MSC/AndL"/>
</dbReference>
<dbReference type="InterPro" id="IPR036019">
    <property type="entry name" value="MscL_channel"/>
</dbReference>
<dbReference type="NCBIfam" id="TIGR00220">
    <property type="entry name" value="mscL"/>
    <property type="match status" value="1"/>
</dbReference>
<dbReference type="NCBIfam" id="NF001843">
    <property type="entry name" value="PRK00567.1-4"/>
    <property type="match status" value="1"/>
</dbReference>
<dbReference type="NCBIfam" id="NF010557">
    <property type="entry name" value="PRK13952.1"/>
    <property type="match status" value="1"/>
</dbReference>
<dbReference type="PANTHER" id="PTHR30266:SF2">
    <property type="entry name" value="LARGE-CONDUCTANCE MECHANOSENSITIVE CHANNEL"/>
    <property type="match status" value="1"/>
</dbReference>
<dbReference type="PANTHER" id="PTHR30266">
    <property type="entry name" value="MECHANOSENSITIVE CHANNEL MSCL"/>
    <property type="match status" value="1"/>
</dbReference>
<dbReference type="Pfam" id="PF01741">
    <property type="entry name" value="MscL"/>
    <property type="match status" value="1"/>
</dbReference>
<dbReference type="PRINTS" id="PR01264">
    <property type="entry name" value="MECHCHANNEL"/>
</dbReference>
<dbReference type="SUPFAM" id="SSF81330">
    <property type="entry name" value="Gated mechanosensitive channel"/>
    <property type="match status" value="1"/>
</dbReference>
<dbReference type="PROSITE" id="PS01327">
    <property type="entry name" value="MSCL"/>
    <property type="match status" value="1"/>
</dbReference>
<accession>P53380</accession>
<accession>P54747</accession>
<feature type="chain" id="PRO_0000192438" description="Large-conductance mechanosensitive channel">
    <location>
        <begin position="1"/>
        <end position="152"/>
    </location>
</feature>
<feature type="transmembrane region" description="Helical" evidence="1">
    <location>
        <begin position="14"/>
        <end position="34"/>
    </location>
</feature>
<feature type="transmembrane region" description="Helical" evidence="1">
    <location>
        <begin position="81"/>
        <end position="101"/>
    </location>
</feature>
<feature type="sequence conflict" description="In Ref. 1; BAA08847." evidence="2" ref="1">
    <original>I</original>
    <variation>V</variation>
    <location>
        <position position="22"/>
    </location>
</feature>
<feature type="sequence conflict" description="In Ref. 1." evidence="2" ref="1">
    <original>I</original>
    <variation>V</variation>
    <location>
        <position position="43"/>
    </location>
</feature>
<feature type="sequence conflict" description="In Ref. 1." evidence="2" ref="1">
    <original>R</original>
    <variation>S</variation>
    <location>
        <position position="45"/>
    </location>
</feature>
<feature type="sequence conflict" description="In Ref. 1; BAA08847." evidence="2" ref="1">
    <original>A</original>
    <variation>V</variation>
    <location>
        <position position="100"/>
    </location>
</feature>
<feature type="sequence conflict" description="In Ref. 1; BAA08847." evidence="2" ref="1">
    <original>Q</original>
    <variation>K</variation>
    <location>
        <position position="118"/>
    </location>
</feature>
<feature type="sequence conflict" description="In Ref. 1; BAA08847." evidence="2" ref="1">
    <original>C</original>
    <variation>Y</variation>
    <location>
        <position position="130"/>
    </location>
</feature>
<sequence length="152" mass="16811">MWKEFKEFAMKGNVIDLAIGVIIGGAFGKIVTSLVNDIIMPVIGRLVGKVDFSNLYINLSGQQFNSLQEAQAAGAATINYGLFLNNLINFLIIAFSIFIAIKQINKLKNFTKKKEEVQVEATEKDCPYCCTKIDIKATRCPHCTSVLEEATN</sequence>
<organism>
    <name type="scientific">Clostridium perfringens (strain 13 / Type A)</name>
    <dbReference type="NCBI Taxonomy" id="195102"/>
    <lineage>
        <taxon>Bacteria</taxon>
        <taxon>Bacillati</taxon>
        <taxon>Bacillota</taxon>
        <taxon>Clostridia</taxon>
        <taxon>Eubacteriales</taxon>
        <taxon>Clostridiaceae</taxon>
        <taxon>Clostridium</taxon>
    </lineage>
</organism>
<proteinExistence type="inferred from homology"/>
<comment type="function">
    <text evidence="1">Channel that opens in response to stretch forces in the membrane lipid bilayer. May participate in the regulation of osmotic pressure changes within the cell.</text>
</comment>
<comment type="subunit">
    <text evidence="1">Homopentamer.</text>
</comment>
<comment type="subcellular location">
    <subcellularLocation>
        <location evidence="1">Cell membrane</location>
        <topology evidence="1">Multi-pass membrane protein</topology>
    </subcellularLocation>
</comment>
<comment type="similarity">
    <text evidence="1 2">Belongs to the MscL family.</text>
</comment>
<evidence type="ECO:0000255" key="1">
    <source>
        <dbReference type="HAMAP-Rule" id="MF_00115"/>
    </source>
</evidence>
<evidence type="ECO:0000305" key="2"/>
<protein>
    <recommendedName>
        <fullName evidence="1">Large-conductance mechanosensitive channel</fullName>
    </recommendedName>
</protein>
<keyword id="KW-1003">Cell membrane</keyword>
<keyword id="KW-0407">Ion channel</keyword>
<keyword id="KW-0406">Ion transport</keyword>
<keyword id="KW-0472">Membrane</keyword>
<keyword id="KW-1185">Reference proteome</keyword>
<keyword id="KW-0812">Transmembrane</keyword>
<keyword id="KW-1133">Transmembrane helix</keyword>
<keyword id="KW-0813">Transport</keyword>